<protein>
    <recommendedName>
        <fullName evidence="1">Large ribosomal subunit protein bL28</fullName>
    </recommendedName>
    <alternativeName>
        <fullName evidence="3">50S ribosomal protein L28</fullName>
    </alternativeName>
</protein>
<gene>
    <name evidence="1" type="primary">rpmB</name>
    <name evidence="1" type="synonym">rpl28</name>
    <name type="ordered locus">PMN2A_0305</name>
</gene>
<reference key="1">
    <citation type="journal article" date="2007" name="PLoS Genet.">
        <title>Patterns and implications of gene gain and loss in the evolution of Prochlorococcus.</title>
        <authorList>
            <person name="Kettler G.C."/>
            <person name="Martiny A.C."/>
            <person name="Huang K."/>
            <person name="Zucker J."/>
            <person name="Coleman M.L."/>
            <person name="Rodrigue S."/>
            <person name="Chen F."/>
            <person name="Lapidus A."/>
            <person name="Ferriera S."/>
            <person name="Johnson J."/>
            <person name="Steglich C."/>
            <person name="Church G.M."/>
            <person name="Richardson P."/>
            <person name="Chisholm S.W."/>
        </authorList>
    </citation>
    <scope>NUCLEOTIDE SEQUENCE [LARGE SCALE GENOMIC DNA]</scope>
    <source>
        <strain>NATL2A</strain>
    </source>
</reference>
<keyword id="KW-1185">Reference proteome</keyword>
<keyword id="KW-0687">Ribonucleoprotein</keyword>
<keyword id="KW-0689">Ribosomal protein</keyword>
<comment type="similarity">
    <text evidence="1">Belongs to the bacterial ribosomal protein bL28 family.</text>
</comment>
<name>RL28_PROMT</name>
<feature type="chain" id="PRO_1000007308" description="Large ribosomal subunit protein bL28">
    <location>
        <begin position="1"/>
        <end position="78"/>
    </location>
</feature>
<feature type="region of interest" description="Disordered" evidence="2">
    <location>
        <begin position="1"/>
        <end position="23"/>
    </location>
</feature>
<feature type="compositionally biased region" description="Polar residues" evidence="2">
    <location>
        <begin position="1"/>
        <end position="20"/>
    </location>
</feature>
<sequence length="78" mass="9062">MSRVCQLTGTRANNGMSVSHSHIRTKKLQQANLQQRRLWWEEENKWINIRVTTRALKTIQKKGLGKYAKSLGVDLNKL</sequence>
<accession>Q46L31</accession>
<organism>
    <name type="scientific">Prochlorococcus marinus (strain NATL2A)</name>
    <dbReference type="NCBI Taxonomy" id="59920"/>
    <lineage>
        <taxon>Bacteria</taxon>
        <taxon>Bacillati</taxon>
        <taxon>Cyanobacteriota</taxon>
        <taxon>Cyanophyceae</taxon>
        <taxon>Synechococcales</taxon>
        <taxon>Prochlorococcaceae</taxon>
        <taxon>Prochlorococcus</taxon>
    </lineage>
</organism>
<evidence type="ECO:0000255" key="1">
    <source>
        <dbReference type="HAMAP-Rule" id="MF_00373"/>
    </source>
</evidence>
<evidence type="ECO:0000256" key="2">
    <source>
        <dbReference type="SAM" id="MobiDB-lite"/>
    </source>
</evidence>
<evidence type="ECO:0000305" key="3"/>
<dbReference type="EMBL" id="CP000095">
    <property type="protein sequence ID" value="AAZ57797.1"/>
    <property type="molecule type" value="Genomic_DNA"/>
</dbReference>
<dbReference type="RefSeq" id="WP_011293839.1">
    <property type="nucleotide sequence ID" value="NC_007335.2"/>
</dbReference>
<dbReference type="SMR" id="Q46L31"/>
<dbReference type="STRING" id="59920.PMN2A_0305"/>
<dbReference type="KEGG" id="pmn:PMN2A_0305"/>
<dbReference type="HOGENOM" id="CLU_064548_3_0_3"/>
<dbReference type="OrthoDB" id="9805609at2"/>
<dbReference type="PhylomeDB" id="Q46L31"/>
<dbReference type="Proteomes" id="UP000002535">
    <property type="component" value="Chromosome"/>
</dbReference>
<dbReference type="GO" id="GO:1990904">
    <property type="term" value="C:ribonucleoprotein complex"/>
    <property type="evidence" value="ECO:0007669"/>
    <property type="project" value="UniProtKB-KW"/>
</dbReference>
<dbReference type="GO" id="GO:0005840">
    <property type="term" value="C:ribosome"/>
    <property type="evidence" value="ECO:0007669"/>
    <property type="project" value="UniProtKB-KW"/>
</dbReference>
<dbReference type="GO" id="GO:0003735">
    <property type="term" value="F:structural constituent of ribosome"/>
    <property type="evidence" value="ECO:0007669"/>
    <property type="project" value="InterPro"/>
</dbReference>
<dbReference type="GO" id="GO:0006412">
    <property type="term" value="P:translation"/>
    <property type="evidence" value="ECO:0007669"/>
    <property type="project" value="UniProtKB-UniRule"/>
</dbReference>
<dbReference type="Gene3D" id="2.30.170.40">
    <property type="entry name" value="Ribosomal protein L28/L24"/>
    <property type="match status" value="1"/>
</dbReference>
<dbReference type="HAMAP" id="MF_00373">
    <property type="entry name" value="Ribosomal_bL28"/>
    <property type="match status" value="1"/>
</dbReference>
<dbReference type="InterPro" id="IPR026569">
    <property type="entry name" value="Ribosomal_bL28"/>
</dbReference>
<dbReference type="InterPro" id="IPR034704">
    <property type="entry name" value="Ribosomal_bL28/bL31-like_sf"/>
</dbReference>
<dbReference type="InterPro" id="IPR001383">
    <property type="entry name" value="Ribosomal_bL28_bact-type"/>
</dbReference>
<dbReference type="InterPro" id="IPR037147">
    <property type="entry name" value="Ribosomal_bL28_sf"/>
</dbReference>
<dbReference type="NCBIfam" id="TIGR00009">
    <property type="entry name" value="L28"/>
    <property type="match status" value="1"/>
</dbReference>
<dbReference type="PANTHER" id="PTHR13528">
    <property type="entry name" value="39S RIBOSOMAL PROTEIN L28, MITOCHONDRIAL"/>
    <property type="match status" value="1"/>
</dbReference>
<dbReference type="PANTHER" id="PTHR13528:SF2">
    <property type="entry name" value="LARGE RIBOSOMAL SUBUNIT PROTEIN BL28M"/>
    <property type="match status" value="1"/>
</dbReference>
<dbReference type="Pfam" id="PF00830">
    <property type="entry name" value="Ribosomal_L28"/>
    <property type="match status" value="1"/>
</dbReference>
<dbReference type="SUPFAM" id="SSF143800">
    <property type="entry name" value="L28p-like"/>
    <property type="match status" value="1"/>
</dbReference>
<proteinExistence type="inferred from homology"/>